<keyword id="KW-0238">DNA-binding</keyword>
<keyword id="KW-0597">Phosphoprotein</keyword>
<accession>C7GJZ2</accession>
<proteinExistence type="inferred from homology"/>
<evidence type="ECO:0000250" key="1"/>
<evidence type="ECO:0000250" key="2">
    <source>
        <dbReference type="UniProtKB" id="P38845"/>
    </source>
</evidence>
<evidence type="ECO:0000256" key="3">
    <source>
        <dbReference type="SAM" id="MobiDB-lite"/>
    </source>
</evidence>
<evidence type="ECO:0000305" key="4"/>
<dbReference type="EMBL" id="ACFL01000017">
    <property type="protein sequence ID" value="EEU08899.1"/>
    <property type="molecule type" value="Genomic_DNA"/>
</dbReference>
<dbReference type="SMR" id="C7GJZ2"/>
<dbReference type="OrthoDB" id="40992at4893"/>
<dbReference type="Proteomes" id="UP000008073">
    <property type="component" value="Unassembled WGS sequence"/>
</dbReference>
<dbReference type="GO" id="GO:0005737">
    <property type="term" value="C:cytoplasm"/>
    <property type="evidence" value="ECO:0007669"/>
    <property type="project" value="TreeGrafter"/>
</dbReference>
<dbReference type="GO" id="GO:0031588">
    <property type="term" value="C:nucleotide-activated protein kinase complex"/>
    <property type="evidence" value="ECO:0007669"/>
    <property type="project" value="TreeGrafter"/>
</dbReference>
<dbReference type="GO" id="GO:0005634">
    <property type="term" value="C:nucleus"/>
    <property type="evidence" value="ECO:0007669"/>
    <property type="project" value="TreeGrafter"/>
</dbReference>
<dbReference type="GO" id="GO:0003677">
    <property type="term" value="F:DNA binding"/>
    <property type="evidence" value="ECO:0007669"/>
    <property type="project" value="UniProtKB-KW"/>
</dbReference>
<dbReference type="GO" id="GO:0019901">
    <property type="term" value="F:protein kinase binding"/>
    <property type="evidence" value="ECO:0007669"/>
    <property type="project" value="TreeGrafter"/>
</dbReference>
<dbReference type="GO" id="GO:0007165">
    <property type="term" value="P:signal transduction"/>
    <property type="evidence" value="ECO:0007669"/>
    <property type="project" value="TreeGrafter"/>
</dbReference>
<dbReference type="CDD" id="cd02859">
    <property type="entry name" value="E_set_AMPKbeta_like_N"/>
    <property type="match status" value="1"/>
</dbReference>
<dbReference type="FunFam" id="2.60.40.10:FF:001765">
    <property type="entry name" value="Cruciform DNA-recognizing protein 1"/>
    <property type="match status" value="1"/>
</dbReference>
<dbReference type="Gene3D" id="2.60.40.10">
    <property type="entry name" value="Immunoglobulins"/>
    <property type="match status" value="1"/>
</dbReference>
<dbReference type="InterPro" id="IPR032640">
    <property type="entry name" value="AMPK1_CBM"/>
</dbReference>
<dbReference type="InterPro" id="IPR050827">
    <property type="entry name" value="CRP1_MDG1_kinase"/>
</dbReference>
<dbReference type="InterPro" id="IPR013783">
    <property type="entry name" value="Ig-like_fold"/>
</dbReference>
<dbReference type="InterPro" id="IPR014756">
    <property type="entry name" value="Ig_E-set"/>
</dbReference>
<dbReference type="PANTHER" id="PTHR10343">
    <property type="entry name" value="5'-AMP-ACTIVATED PROTEIN KINASE , BETA SUBUNIT"/>
    <property type="match status" value="1"/>
</dbReference>
<dbReference type="PANTHER" id="PTHR10343:SF81">
    <property type="entry name" value="CRUCIFORM DNA-RECOGNIZING PROTEIN 1-RELATED"/>
    <property type="match status" value="1"/>
</dbReference>
<dbReference type="Pfam" id="PF16561">
    <property type="entry name" value="AMPK1_CBM"/>
    <property type="match status" value="1"/>
</dbReference>
<dbReference type="SUPFAM" id="SSF81296">
    <property type="entry name" value="E set domains"/>
    <property type="match status" value="1"/>
</dbReference>
<name>CRP1_YEAS2</name>
<comment type="function">
    <text evidence="1">Cruciform DNA-binding protein which exerts an enhancing effect on the cleavage of cruciform DNA (X-DNA) by endonuclease VII from bacteriophage T4.</text>
</comment>
<comment type="PTM">
    <text evidence="1">Cleaved in the vicinity of position 160 to give an X-DNA-binding N-terminal subpeptide and a non-DNA-binding C-terminal subpeptide.</text>
</comment>
<comment type="similarity">
    <text evidence="4">Belongs to the CRP1/MDG1 family.</text>
</comment>
<organism>
    <name type="scientific">Saccharomyces cerevisiae (strain JAY291)</name>
    <name type="common">Baker's yeast</name>
    <dbReference type="NCBI Taxonomy" id="574961"/>
    <lineage>
        <taxon>Eukaryota</taxon>
        <taxon>Fungi</taxon>
        <taxon>Dikarya</taxon>
        <taxon>Ascomycota</taxon>
        <taxon>Saccharomycotina</taxon>
        <taxon>Saccharomycetes</taxon>
        <taxon>Saccharomycetales</taxon>
        <taxon>Saccharomycetaceae</taxon>
        <taxon>Saccharomyces</taxon>
    </lineage>
</organism>
<sequence length="465" mass="51124">MSSELMFNYTFSWPAGPKDVILTGTFDDWRGTLPLVKTAKGNFEITMPVKLANKDDTFQFKFIVDGVWCVSDSYKKEHVSEGIENNFLQITDLVETQEVAGASRIPEAGGLLCGKPPRSAGPPSTSNRKKNKRNNKKRRSKLKKKSTKNNKNSNESLDDNEEEDGVTGTTTEDVTGTSREETPLAEPTNVSKEAPGNFHILPIDQSADTTQSNGIIGGPGPVLVPNPGEIKEFTEIRDVDARELNERLNKKEEVPEPVAGPIVESSVTEKSPALPQADDPIVETKEMAHNVQELTPQVEAVTPLINEPEPLPTPEAQISIPESSKVEPVEGSLQSKLVEKRESTEGVLDGSKKVENKAKKDEEVFTLDPIVNKAPKLPLTDEQTAEGRKSPAVSEEKEKKKKQEKGSKEVKRSETSKEKKPSAKEVKKQTVKASKKQTASPLSSSTEEPKKKKTGFFGKLKKLFK</sequence>
<gene>
    <name type="primary">CRP1</name>
    <name type="ORF">C1Q_00510</name>
</gene>
<reference key="1">
    <citation type="journal article" date="2009" name="Genome Res.">
        <title>Genome structure of a Saccharomyces cerevisiae strain widely used in bioethanol production.</title>
        <authorList>
            <person name="Argueso J.L."/>
            <person name="Carazzolle M.F."/>
            <person name="Mieczkowski P.A."/>
            <person name="Duarte F.M."/>
            <person name="Netto O.V.C."/>
            <person name="Missawa S.K."/>
            <person name="Galzerani F."/>
            <person name="Costa G.G.L."/>
            <person name="Vidal R.O."/>
            <person name="Noronha M.F."/>
            <person name="Dominska M."/>
            <person name="Andrietta M.G.S."/>
            <person name="Andrietta S.R."/>
            <person name="Cunha A.F."/>
            <person name="Gomes L.H."/>
            <person name="Tavares F.C.A."/>
            <person name="Alcarde A.R."/>
            <person name="Dietrich F.S."/>
            <person name="McCusker J.H."/>
            <person name="Petes T.D."/>
            <person name="Pereira G.A.G."/>
        </authorList>
    </citation>
    <scope>NUCLEOTIDE SEQUENCE [LARGE SCALE GENOMIC DNA]</scope>
    <source>
        <strain>JAY291</strain>
    </source>
</reference>
<protein>
    <recommendedName>
        <fullName>Cruciform DNA-recognizing protein 1</fullName>
    </recommendedName>
    <component>
        <recommendedName>
            <fullName>CRP1 short N-terminal subpeptide</fullName>
        </recommendedName>
    </component>
    <component>
        <recommendedName>
            <fullName>CRP1 short C-terminal subpeptide</fullName>
        </recommendedName>
    </component>
</protein>
<feature type="chain" id="PRO_0000409599" description="Cruciform DNA-recognizing protein 1">
    <location>
        <begin position="1"/>
        <end position="465"/>
    </location>
</feature>
<feature type="chain" id="PRO_0000409600" description="CRP1 short N-terminal subpeptide" evidence="1">
    <location>
        <begin position="1"/>
        <end position="160"/>
    </location>
</feature>
<feature type="chain" id="PRO_0000409601" description="CRP1 short C-terminal subpeptide" evidence="1">
    <location>
        <begin position="161"/>
        <end position="465"/>
    </location>
</feature>
<feature type="region of interest" description="Disordered" evidence="3">
    <location>
        <begin position="107"/>
        <end position="227"/>
    </location>
</feature>
<feature type="region of interest" description="X-DNA-binding" evidence="1">
    <location>
        <begin position="160"/>
        <end position="161"/>
    </location>
</feature>
<feature type="region of interest" description="Disordered" evidence="3">
    <location>
        <begin position="247"/>
        <end position="275"/>
    </location>
</feature>
<feature type="region of interest" description="Disordered" evidence="3">
    <location>
        <begin position="305"/>
        <end position="465"/>
    </location>
</feature>
<feature type="compositionally biased region" description="Basic residues" evidence="3">
    <location>
        <begin position="127"/>
        <end position="148"/>
    </location>
</feature>
<feature type="compositionally biased region" description="Acidic residues" evidence="3">
    <location>
        <begin position="156"/>
        <end position="165"/>
    </location>
</feature>
<feature type="compositionally biased region" description="Low complexity" evidence="3">
    <location>
        <begin position="166"/>
        <end position="177"/>
    </location>
</feature>
<feature type="compositionally biased region" description="Basic and acidic residues" evidence="3">
    <location>
        <begin position="337"/>
        <end position="363"/>
    </location>
</feature>
<feature type="compositionally biased region" description="Basic and acidic residues" evidence="3">
    <location>
        <begin position="385"/>
        <end position="398"/>
    </location>
</feature>
<feature type="compositionally biased region" description="Basic and acidic residues" evidence="3">
    <location>
        <begin position="404"/>
        <end position="428"/>
    </location>
</feature>
<feature type="compositionally biased region" description="Basic residues" evidence="3">
    <location>
        <begin position="451"/>
        <end position="465"/>
    </location>
</feature>
<feature type="modified residue" description="Phosphoserine" evidence="2">
    <location>
        <position position="153"/>
    </location>
</feature>
<feature type="modified residue" description="Phosphoserine" evidence="2">
    <location>
        <position position="156"/>
    </location>
</feature>
<feature type="modified residue" description="Phosphothreonine" evidence="2">
    <location>
        <position position="182"/>
    </location>
</feature>
<feature type="modified residue" description="Phosphoserine" evidence="2">
    <location>
        <position position="271"/>
    </location>
</feature>
<feature type="modified residue" description="Phosphothreonine" evidence="2">
    <location>
        <position position="295"/>
    </location>
</feature>
<feature type="modified residue" description="Phosphoserine" evidence="2">
    <location>
        <position position="319"/>
    </location>
</feature>
<feature type="modified residue" description="Phosphoserine" evidence="2">
    <location>
        <position position="343"/>
    </location>
</feature>
<feature type="modified residue" description="Phosphothreonine" evidence="2">
    <location>
        <position position="366"/>
    </location>
</feature>
<feature type="modified residue" description="Phosphoserine" evidence="2">
    <location>
        <position position="394"/>
    </location>
</feature>
<feature type="modified residue" description="Phosphoserine" evidence="2">
    <location>
        <position position="440"/>
    </location>
</feature>